<comment type="function">
    <text evidence="1">Exhibits S-adenosyl-L-methionine-dependent methyltransferase activity.</text>
</comment>
<comment type="similarity">
    <text evidence="2">Belongs to the UPF0677 family.</text>
</comment>
<gene>
    <name type="ordered locus">MAB_4328c</name>
</gene>
<proteinExistence type="inferred from homology"/>
<evidence type="ECO:0000250" key="1"/>
<evidence type="ECO:0000305" key="2"/>
<reference key="1">
    <citation type="journal article" date="2009" name="PLoS ONE">
        <title>Non mycobacterial virulence genes in the genome of the emerging pathogen Mycobacterium abscessus.</title>
        <authorList>
            <person name="Ripoll F."/>
            <person name="Pasek S."/>
            <person name="Schenowitz C."/>
            <person name="Dossat C."/>
            <person name="Barbe V."/>
            <person name="Rottman M."/>
            <person name="Macheras E."/>
            <person name="Heym B."/>
            <person name="Herrmann J.L."/>
            <person name="Daffe M."/>
            <person name="Brosch R."/>
            <person name="Risler J.L."/>
            <person name="Gaillard J.L."/>
        </authorList>
    </citation>
    <scope>NUCLEOTIDE SEQUENCE [LARGE SCALE GENOMIC DNA]</scope>
    <source>
        <strain>ATCC 19977 / DSM 44196 / CCUG 20993 / CIP 104536 / JCM 13569 / NCTC 13031 / TMC 1543 / L948</strain>
    </source>
</reference>
<organism>
    <name type="scientific">Mycobacteroides abscessus (strain ATCC 19977 / DSM 44196 / CCUG 20993 / CIP 104536 / JCM 13569 / NCTC 13031 / TMC 1543 / L948)</name>
    <name type="common">Mycobacterium abscessus</name>
    <dbReference type="NCBI Taxonomy" id="561007"/>
    <lineage>
        <taxon>Bacteria</taxon>
        <taxon>Bacillati</taxon>
        <taxon>Actinomycetota</taxon>
        <taxon>Actinomycetes</taxon>
        <taxon>Mycobacteriales</taxon>
        <taxon>Mycobacteriaceae</taxon>
        <taxon>Mycobacteroides</taxon>
        <taxon>Mycobacteroides abscessus</taxon>
    </lineage>
</organism>
<feature type="chain" id="PRO_0000361123" description="Putative S-adenosyl-L-methionine-dependent methyltransferase MAB_4328c">
    <location>
        <begin position="1"/>
        <end position="300"/>
    </location>
</feature>
<feature type="binding site" evidence="1">
    <location>
        <position position="126"/>
    </location>
    <ligand>
        <name>S-adenosyl-L-methionine</name>
        <dbReference type="ChEBI" id="CHEBI:59789"/>
    </ligand>
</feature>
<feature type="binding site" evidence="1">
    <location>
        <begin position="155"/>
        <end position="156"/>
    </location>
    <ligand>
        <name>S-adenosyl-L-methionine</name>
        <dbReference type="ChEBI" id="CHEBI:59789"/>
    </ligand>
</feature>
<protein>
    <recommendedName>
        <fullName>Putative S-adenosyl-L-methionine-dependent methyltransferase MAB_4328c</fullName>
        <ecNumber>2.1.1.-</ecNumber>
    </recommendedName>
</protein>
<accession>B1MJP3</accession>
<dbReference type="EC" id="2.1.1.-"/>
<dbReference type="EMBL" id="CU458896">
    <property type="protein sequence ID" value="CAM64400.1"/>
    <property type="molecule type" value="Genomic_DNA"/>
</dbReference>
<dbReference type="RefSeq" id="WP_005079993.1">
    <property type="nucleotide sequence ID" value="NZ_MLCG01000001.1"/>
</dbReference>
<dbReference type="SMR" id="B1MJP3"/>
<dbReference type="GeneID" id="93381275"/>
<dbReference type="KEGG" id="mab:MAB_4328c"/>
<dbReference type="Proteomes" id="UP000007137">
    <property type="component" value="Chromosome"/>
</dbReference>
<dbReference type="GO" id="GO:0008168">
    <property type="term" value="F:methyltransferase activity"/>
    <property type="evidence" value="ECO:0007669"/>
    <property type="project" value="UniProtKB-KW"/>
</dbReference>
<dbReference type="GO" id="GO:0032259">
    <property type="term" value="P:methylation"/>
    <property type="evidence" value="ECO:0007669"/>
    <property type="project" value="UniProtKB-KW"/>
</dbReference>
<dbReference type="Gene3D" id="3.40.50.150">
    <property type="entry name" value="Vaccinia Virus protein VP39"/>
    <property type="match status" value="1"/>
</dbReference>
<dbReference type="InterPro" id="IPR007213">
    <property type="entry name" value="Ppm1/Ppm2/Tcmp"/>
</dbReference>
<dbReference type="InterPro" id="IPR029063">
    <property type="entry name" value="SAM-dependent_MTases_sf"/>
</dbReference>
<dbReference type="InterPro" id="IPR011610">
    <property type="entry name" value="SAM_mthyl_Trfase_ML2640-like"/>
</dbReference>
<dbReference type="NCBIfam" id="TIGR00027">
    <property type="entry name" value="mthyl_TIGR00027"/>
    <property type="match status" value="1"/>
</dbReference>
<dbReference type="PANTHER" id="PTHR43619">
    <property type="entry name" value="S-ADENOSYL-L-METHIONINE-DEPENDENT METHYLTRANSFERASE YKTD-RELATED"/>
    <property type="match status" value="1"/>
</dbReference>
<dbReference type="PANTHER" id="PTHR43619:SF2">
    <property type="entry name" value="S-ADENOSYL-L-METHIONINE-DEPENDENT METHYLTRANSFERASES SUPERFAMILY PROTEIN"/>
    <property type="match status" value="1"/>
</dbReference>
<dbReference type="Pfam" id="PF04072">
    <property type="entry name" value="LCM"/>
    <property type="match status" value="1"/>
</dbReference>
<dbReference type="SUPFAM" id="SSF53335">
    <property type="entry name" value="S-adenosyl-L-methionine-dependent methyltransferases"/>
    <property type="match status" value="1"/>
</dbReference>
<keyword id="KW-0489">Methyltransferase</keyword>
<keyword id="KW-1185">Reference proteome</keyword>
<keyword id="KW-0949">S-adenosyl-L-methionine</keyword>
<keyword id="KW-0808">Transferase</keyword>
<sequence>MRTDRDNWDINTSVGSTALFVAASRALEATKPAPLAADQYAEVFCRAAGGEWAELVAGGVPEHPLRSEDFGQYFVSFQGARTRYFDTYFGKAIEAGVKQVVILASGLDSRAYRLDWAPGTTVFELDQPLVHQFKREALDQHGAEPKAVRAEISVDLREDWGKALQDKGFDPSEPSAWLVEGLLIYLPADAQERLFESIDQLAAPGSFVGIEQMTTYADVVFAMLVAGANESGDQANSDFFSLIYNEQRSEAATWFRCHGWDSERTELLDYLNFSGRTLPEPSQPAWYMFNSISLVSAVKG</sequence>
<name>Y4328_MYCA9</name>